<comment type="similarity">
    <text evidence="1">Belongs to the UPF0251 family.</text>
</comment>
<name>Y2715_METAR</name>
<keyword id="KW-1185">Reference proteome</keyword>
<evidence type="ECO:0000255" key="1">
    <source>
        <dbReference type="HAMAP-Rule" id="MF_00674"/>
    </source>
</evidence>
<gene>
    <name type="ordered locus">UNCMA_27150</name>
    <name type="ORF">LRC524</name>
</gene>
<accession>Q0W830</accession>
<dbReference type="EMBL" id="AM114193">
    <property type="protein sequence ID" value="CAJ35463.1"/>
    <property type="molecule type" value="Genomic_DNA"/>
</dbReference>
<dbReference type="RefSeq" id="WP_012037031.1">
    <property type="nucleotide sequence ID" value="NC_009464.1"/>
</dbReference>
<dbReference type="STRING" id="351160.LRC524"/>
<dbReference type="GeneID" id="5145416"/>
<dbReference type="KEGG" id="rci:LRC524"/>
<dbReference type="PATRIC" id="fig|351160.9.peg.2777"/>
<dbReference type="eggNOG" id="arCOG02238">
    <property type="taxonomic scope" value="Archaea"/>
</dbReference>
<dbReference type="OrthoDB" id="74471at2157"/>
<dbReference type="Proteomes" id="UP000000663">
    <property type="component" value="Chromosome"/>
</dbReference>
<dbReference type="Gene3D" id="1.10.10.10">
    <property type="entry name" value="Winged helix-like DNA-binding domain superfamily/Winged helix DNA-binding domain"/>
    <property type="match status" value="1"/>
</dbReference>
<dbReference type="HAMAP" id="MF_00674">
    <property type="entry name" value="UPF0251"/>
    <property type="match status" value="1"/>
</dbReference>
<dbReference type="InterPro" id="IPR002852">
    <property type="entry name" value="UPF0251"/>
</dbReference>
<dbReference type="InterPro" id="IPR036388">
    <property type="entry name" value="WH-like_DNA-bd_sf"/>
</dbReference>
<dbReference type="PANTHER" id="PTHR37478">
    <property type="match status" value="1"/>
</dbReference>
<dbReference type="PANTHER" id="PTHR37478:SF2">
    <property type="entry name" value="UPF0251 PROTEIN TK0562"/>
    <property type="match status" value="1"/>
</dbReference>
<dbReference type="Pfam" id="PF02001">
    <property type="entry name" value="DUF134"/>
    <property type="match status" value="1"/>
</dbReference>
<sequence>MVRKVKRRVSCLPKATYYKPREIPLCDLEIINLSVEELEAIRLCDLLQIAQDEAADQMGISRKTFWNDLQKARQKVADALVNGKAIQISGGDYVNSGVCKVEFLCQKCNHLWETPCNEKRPENCPKCGSESIYRKGGDGRGKRHTERGFCCPKHGDRAVGDQEESV</sequence>
<protein>
    <recommendedName>
        <fullName evidence="1">UPF0251 protein UNCMA_27150</fullName>
    </recommendedName>
</protein>
<reference key="1">
    <citation type="journal article" date="2006" name="Science">
        <title>Genome of rice cluster I archaea -- the key methane producers in the rice rhizosphere.</title>
        <authorList>
            <person name="Erkel C."/>
            <person name="Kube M."/>
            <person name="Reinhardt R."/>
            <person name="Liesack W."/>
        </authorList>
    </citation>
    <scope>NUCLEOTIDE SEQUENCE [LARGE SCALE GENOMIC DNA]</scope>
    <source>
        <strain>DSM 22066 / NBRC 105507 / MRE50</strain>
    </source>
</reference>
<proteinExistence type="inferred from homology"/>
<organism>
    <name type="scientific">Methanocella arvoryzae (strain DSM 22066 / NBRC 105507 / MRE50)</name>
    <dbReference type="NCBI Taxonomy" id="351160"/>
    <lineage>
        <taxon>Archaea</taxon>
        <taxon>Methanobacteriati</taxon>
        <taxon>Methanobacteriota</taxon>
        <taxon>Stenosarchaea group</taxon>
        <taxon>Methanomicrobia</taxon>
        <taxon>Methanocellales</taxon>
        <taxon>Methanocellaceae</taxon>
        <taxon>Methanocella</taxon>
    </lineage>
</organism>
<feature type="chain" id="PRO_1000044759" description="UPF0251 protein UNCMA_27150">
    <location>
        <begin position="1"/>
        <end position="166"/>
    </location>
</feature>